<accession>Q326D2</accession>
<reference key="1">
    <citation type="journal article" date="2005" name="Nucleic Acids Res.">
        <title>Genome dynamics and diversity of Shigella species, the etiologic agents of bacillary dysentery.</title>
        <authorList>
            <person name="Yang F."/>
            <person name="Yang J."/>
            <person name="Zhang X."/>
            <person name="Chen L."/>
            <person name="Jiang Y."/>
            <person name="Yan Y."/>
            <person name="Tang X."/>
            <person name="Wang J."/>
            <person name="Xiong Z."/>
            <person name="Dong J."/>
            <person name="Xue Y."/>
            <person name="Zhu Y."/>
            <person name="Xu X."/>
            <person name="Sun L."/>
            <person name="Chen S."/>
            <person name="Nie H."/>
            <person name="Peng J."/>
            <person name="Xu J."/>
            <person name="Wang Y."/>
            <person name="Yuan Z."/>
            <person name="Wen Y."/>
            <person name="Yao Z."/>
            <person name="Shen Y."/>
            <person name="Qiang B."/>
            <person name="Hou Y."/>
            <person name="Yu J."/>
            <person name="Jin Q."/>
        </authorList>
    </citation>
    <scope>NUCLEOTIDE SEQUENCE [LARGE SCALE GENOMIC DNA]</scope>
    <source>
        <strain>Sb227</strain>
    </source>
</reference>
<sequence length="206" mass="22622">MRYIVALTGGIGSGKSTVANAFADLGINVIDADIIARQVVEPGAPALHAIADHFGANMIAADGTLQRRALRERIFANPEEKNWLNALLHPLIQQETQHQIQQATSPYVLWVVPLLVENSLYKKANRVLVVDVSPETQLKRTMQRDDVTREHVEQILAAQATREARLAVADDVIDNNGAPDAIASDVARLHAHYLQLASQFVSQEKP</sequence>
<evidence type="ECO:0000255" key="1">
    <source>
        <dbReference type="HAMAP-Rule" id="MF_00376"/>
    </source>
</evidence>
<comment type="function">
    <text evidence="1">Catalyzes the phosphorylation of the 3'-hydroxyl group of dephosphocoenzyme A to form coenzyme A.</text>
</comment>
<comment type="catalytic activity">
    <reaction evidence="1">
        <text>3'-dephospho-CoA + ATP = ADP + CoA + H(+)</text>
        <dbReference type="Rhea" id="RHEA:18245"/>
        <dbReference type="ChEBI" id="CHEBI:15378"/>
        <dbReference type="ChEBI" id="CHEBI:30616"/>
        <dbReference type="ChEBI" id="CHEBI:57287"/>
        <dbReference type="ChEBI" id="CHEBI:57328"/>
        <dbReference type="ChEBI" id="CHEBI:456216"/>
        <dbReference type="EC" id="2.7.1.24"/>
    </reaction>
</comment>
<comment type="pathway">
    <text evidence="1">Cofactor biosynthesis; coenzyme A biosynthesis; CoA from (R)-pantothenate: step 5/5.</text>
</comment>
<comment type="subcellular location">
    <subcellularLocation>
        <location evidence="1">Cytoplasm</location>
    </subcellularLocation>
</comment>
<comment type="similarity">
    <text evidence="1">Belongs to the CoaE family.</text>
</comment>
<gene>
    <name evidence="1" type="primary">coaE</name>
    <name type="ordered locus">SBO_0091</name>
</gene>
<keyword id="KW-0067">ATP-binding</keyword>
<keyword id="KW-0173">Coenzyme A biosynthesis</keyword>
<keyword id="KW-0963">Cytoplasm</keyword>
<keyword id="KW-0418">Kinase</keyword>
<keyword id="KW-0547">Nucleotide-binding</keyword>
<keyword id="KW-0808">Transferase</keyword>
<proteinExistence type="inferred from homology"/>
<dbReference type="EC" id="2.7.1.24" evidence="1"/>
<dbReference type="EMBL" id="CP000036">
    <property type="protein sequence ID" value="ABB64826.1"/>
    <property type="molecule type" value="Genomic_DNA"/>
</dbReference>
<dbReference type="RefSeq" id="WP_001269520.1">
    <property type="nucleotide sequence ID" value="NC_007613.1"/>
</dbReference>
<dbReference type="SMR" id="Q326D2"/>
<dbReference type="GeneID" id="93777332"/>
<dbReference type="KEGG" id="sbo:SBO_0091"/>
<dbReference type="HOGENOM" id="CLU_057180_1_2_6"/>
<dbReference type="UniPathway" id="UPA00241">
    <property type="reaction ID" value="UER00356"/>
</dbReference>
<dbReference type="Proteomes" id="UP000007067">
    <property type="component" value="Chromosome"/>
</dbReference>
<dbReference type="GO" id="GO:0005737">
    <property type="term" value="C:cytoplasm"/>
    <property type="evidence" value="ECO:0007669"/>
    <property type="project" value="UniProtKB-SubCell"/>
</dbReference>
<dbReference type="GO" id="GO:0005524">
    <property type="term" value="F:ATP binding"/>
    <property type="evidence" value="ECO:0007669"/>
    <property type="project" value="UniProtKB-UniRule"/>
</dbReference>
<dbReference type="GO" id="GO:0004140">
    <property type="term" value="F:dephospho-CoA kinase activity"/>
    <property type="evidence" value="ECO:0007669"/>
    <property type="project" value="UniProtKB-UniRule"/>
</dbReference>
<dbReference type="GO" id="GO:0015937">
    <property type="term" value="P:coenzyme A biosynthetic process"/>
    <property type="evidence" value="ECO:0007669"/>
    <property type="project" value="UniProtKB-UniRule"/>
</dbReference>
<dbReference type="CDD" id="cd02022">
    <property type="entry name" value="DPCK"/>
    <property type="match status" value="1"/>
</dbReference>
<dbReference type="FunFam" id="3.40.50.300:FF:000518">
    <property type="entry name" value="Dephospho-CoA kinase"/>
    <property type="match status" value="1"/>
</dbReference>
<dbReference type="Gene3D" id="3.40.50.300">
    <property type="entry name" value="P-loop containing nucleotide triphosphate hydrolases"/>
    <property type="match status" value="1"/>
</dbReference>
<dbReference type="HAMAP" id="MF_00376">
    <property type="entry name" value="Dephospho_CoA_kinase"/>
    <property type="match status" value="1"/>
</dbReference>
<dbReference type="InterPro" id="IPR001977">
    <property type="entry name" value="Depp_CoAkinase"/>
</dbReference>
<dbReference type="InterPro" id="IPR027417">
    <property type="entry name" value="P-loop_NTPase"/>
</dbReference>
<dbReference type="NCBIfam" id="TIGR00152">
    <property type="entry name" value="dephospho-CoA kinase"/>
    <property type="match status" value="1"/>
</dbReference>
<dbReference type="PANTHER" id="PTHR10695:SF46">
    <property type="entry name" value="BIFUNCTIONAL COENZYME A SYNTHASE-RELATED"/>
    <property type="match status" value="1"/>
</dbReference>
<dbReference type="PANTHER" id="PTHR10695">
    <property type="entry name" value="DEPHOSPHO-COA KINASE-RELATED"/>
    <property type="match status" value="1"/>
</dbReference>
<dbReference type="Pfam" id="PF01121">
    <property type="entry name" value="CoaE"/>
    <property type="match status" value="1"/>
</dbReference>
<dbReference type="SUPFAM" id="SSF52540">
    <property type="entry name" value="P-loop containing nucleoside triphosphate hydrolases"/>
    <property type="match status" value="1"/>
</dbReference>
<dbReference type="PROSITE" id="PS51219">
    <property type="entry name" value="DPCK"/>
    <property type="match status" value="1"/>
</dbReference>
<name>COAE_SHIBS</name>
<organism>
    <name type="scientific">Shigella boydii serotype 4 (strain Sb227)</name>
    <dbReference type="NCBI Taxonomy" id="300268"/>
    <lineage>
        <taxon>Bacteria</taxon>
        <taxon>Pseudomonadati</taxon>
        <taxon>Pseudomonadota</taxon>
        <taxon>Gammaproteobacteria</taxon>
        <taxon>Enterobacterales</taxon>
        <taxon>Enterobacteriaceae</taxon>
        <taxon>Shigella</taxon>
    </lineage>
</organism>
<protein>
    <recommendedName>
        <fullName evidence="1">Dephospho-CoA kinase</fullName>
        <ecNumber evidence="1">2.7.1.24</ecNumber>
    </recommendedName>
    <alternativeName>
        <fullName evidence="1">Dephosphocoenzyme A kinase</fullName>
    </alternativeName>
</protein>
<feature type="chain" id="PRO_0000243339" description="Dephospho-CoA kinase">
    <location>
        <begin position="1"/>
        <end position="206"/>
    </location>
</feature>
<feature type="domain" description="DPCK" evidence="1">
    <location>
        <begin position="4"/>
        <end position="200"/>
    </location>
</feature>
<feature type="binding site" evidence="1">
    <location>
        <begin position="12"/>
        <end position="17"/>
    </location>
    <ligand>
        <name>ATP</name>
        <dbReference type="ChEBI" id="CHEBI:30616"/>
    </ligand>
</feature>